<sequence length="209" mass="24258">MTIELLTPFTKVELEPEIKEKKRKQVGILGGNFNPVHNAHLIVADQVRQQLGLDQVLLMPEYQPPHVDKKETIPEHHRLKMLELAIEGIDGLVIETIELERKGISYTYDTMKILTEKNPDTDYYFIIGADMVDYLPKWYRIDELVDMVQFVGVQRPRYKVGTSYPVIWVDVPLMDISSSMVRDFLAQGRKPNFLLPQPVLDYIEKEGLY</sequence>
<organism>
    <name type="scientific">Streptococcus pneumoniae (strain ATCC BAA-255 / R6)</name>
    <dbReference type="NCBI Taxonomy" id="171101"/>
    <lineage>
        <taxon>Bacteria</taxon>
        <taxon>Bacillati</taxon>
        <taxon>Bacillota</taxon>
        <taxon>Bacilli</taxon>
        <taxon>Lactobacillales</taxon>
        <taxon>Streptococcaceae</taxon>
        <taxon>Streptococcus</taxon>
    </lineage>
</organism>
<proteinExistence type="inferred from homology"/>
<gene>
    <name evidence="1" type="primary">nadD</name>
    <name type="ordered locus">spr1592</name>
</gene>
<dbReference type="EC" id="2.7.7.18" evidence="1"/>
<dbReference type="EMBL" id="AE007317">
    <property type="protein sequence ID" value="AAL00395.1"/>
    <property type="molecule type" value="Genomic_DNA"/>
</dbReference>
<dbReference type="PIR" id="F98070">
    <property type="entry name" value="F98070"/>
</dbReference>
<dbReference type="RefSeq" id="NP_359184.1">
    <property type="nucleotide sequence ID" value="NC_003098.1"/>
</dbReference>
<dbReference type="RefSeq" id="WP_000151313.1">
    <property type="nucleotide sequence ID" value="NC_003098.1"/>
</dbReference>
<dbReference type="SMR" id="P65505"/>
<dbReference type="STRING" id="171101.spr1592"/>
<dbReference type="KEGG" id="spr:spr1592"/>
<dbReference type="PATRIC" id="fig|171101.6.peg.1719"/>
<dbReference type="eggNOG" id="COG1057">
    <property type="taxonomic scope" value="Bacteria"/>
</dbReference>
<dbReference type="HOGENOM" id="CLU_069765_3_1_9"/>
<dbReference type="UniPathway" id="UPA00253">
    <property type="reaction ID" value="UER00332"/>
</dbReference>
<dbReference type="Proteomes" id="UP000000586">
    <property type="component" value="Chromosome"/>
</dbReference>
<dbReference type="GO" id="GO:0005524">
    <property type="term" value="F:ATP binding"/>
    <property type="evidence" value="ECO:0007669"/>
    <property type="project" value="UniProtKB-KW"/>
</dbReference>
<dbReference type="GO" id="GO:0000309">
    <property type="term" value="F:nicotinamide-nucleotide adenylyltransferase activity"/>
    <property type="evidence" value="ECO:0000318"/>
    <property type="project" value="GO_Central"/>
</dbReference>
<dbReference type="GO" id="GO:0004515">
    <property type="term" value="F:nicotinate-nucleotide adenylyltransferase activity"/>
    <property type="evidence" value="ECO:0000318"/>
    <property type="project" value="GO_Central"/>
</dbReference>
<dbReference type="GO" id="GO:0009435">
    <property type="term" value="P:NAD biosynthetic process"/>
    <property type="evidence" value="ECO:0000318"/>
    <property type="project" value="GO_Central"/>
</dbReference>
<dbReference type="CDD" id="cd02165">
    <property type="entry name" value="NMNAT"/>
    <property type="match status" value="1"/>
</dbReference>
<dbReference type="FunFam" id="3.40.50.620:FF:000079">
    <property type="entry name" value="Probable nicotinate-nucleotide adenylyltransferase"/>
    <property type="match status" value="1"/>
</dbReference>
<dbReference type="Gene3D" id="3.40.50.620">
    <property type="entry name" value="HUPs"/>
    <property type="match status" value="1"/>
</dbReference>
<dbReference type="HAMAP" id="MF_00244">
    <property type="entry name" value="NaMN_adenylyltr"/>
    <property type="match status" value="1"/>
</dbReference>
<dbReference type="InterPro" id="IPR004821">
    <property type="entry name" value="Cyt_trans-like"/>
</dbReference>
<dbReference type="InterPro" id="IPR005248">
    <property type="entry name" value="NadD/NMNAT"/>
</dbReference>
<dbReference type="InterPro" id="IPR014729">
    <property type="entry name" value="Rossmann-like_a/b/a_fold"/>
</dbReference>
<dbReference type="NCBIfam" id="TIGR00125">
    <property type="entry name" value="cyt_tran_rel"/>
    <property type="match status" value="1"/>
</dbReference>
<dbReference type="NCBIfam" id="TIGR00482">
    <property type="entry name" value="nicotinate (nicotinamide) nucleotide adenylyltransferase"/>
    <property type="match status" value="1"/>
</dbReference>
<dbReference type="NCBIfam" id="NF000840">
    <property type="entry name" value="PRK00071.1-3"/>
    <property type="match status" value="1"/>
</dbReference>
<dbReference type="NCBIfam" id="NF000841">
    <property type="entry name" value="PRK00071.1-4"/>
    <property type="match status" value="1"/>
</dbReference>
<dbReference type="PANTHER" id="PTHR39321">
    <property type="entry name" value="NICOTINATE-NUCLEOTIDE ADENYLYLTRANSFERASE-RELATED"/>
    <property type="match status" value="1"/>
</dbReference>
<dbReference type="PANTHER" id="PTHR39321:SF3">
    <property type="entry name" value="PHOSPHOPANTETHEINE ADENYLYLTRANSFERASE"/>
    <property type="match status" value="1"/>
</dbReference>
<dbReference type="Pfam" id="PF01467">
    <property type="entry name" value="CTP_transf_like"/>
    <property type="match status" value="1"/>
</dbReference>
<dbReference type="SUPFAM" id="SSF52374">
    <property type="entry name" value="Nucleotidylyl transferase"/>
    <property type="match status" value="1"/>
</dbReference>
<reference key="1">
    <citation type="journal article" date="2001" name="J. Bacteriol.">
        <title>Genome of the bacterium Streptococcus pneumoniae strain R6.</title>
        <authorList>
            <person name="Hoskins J."/>
            <person name="Alborn W.E. Jr."/>
            <person name="Arnold J."/>
            <person name="Blaszczak L.C."/>
            <person name="Burgett S."/>
            <person name="DeHoff B.S."/>
            <person name="Estrem S.T."/>
            <person name="Fritz L."/>
            <person name="Fu D.-J."/>
            <person name="Fuller W."/>
            <person name="Geringer C."/>
            <person name="Gilmour R."/>
            <person name="Glass J.S."/>
            <person name="Khoja H."/>
            <person name="Kraft A.R."/>
            <person name="Lagace R.E."/>
            <person name="LeBlanc D.J."/>
            <person name="Lee L.N."/>
            <person name="Lefkowitz E.J."/>
            <person name="Lu J."/>
            <person name="Matsushima P."/>
            <person name="McAhren S.M."/>
            <person name="McHenney M."/>
            <person name="McLeaster K."/>
            <person name="Mundy C.W."/>
            <person name="Nicas T.I."/>
            <person name="Norris F.H."/>
            <person name="O'Gara M."/>
            <person name="Peery R.B."/>
            <person name="Robertson G.T."/>
            <person name="Rockey P."/>
            <person name="Sun P.-M."/>
            <person name="Winkler M.E."/>
            <person name="Yang Y."/>
            <person name="Young-Bellido M."/>
            <person name="Zhao G."/>
            <person name="Zook C.A."/>
            <person name="Baltz R.H."/>
            <person name="Jaskunas S.R."/>
            <person name="Rosteck P.R. Jr."/>
            <person name="Skatrud P.L."/>
            <person name="Glass J.I."/>
        </authorList>
    </citation>
    <scope>NUCLEOTIDE SEQUENCE [LARGE SCALE GENOMIC DNA]</scope>
    <source>
        <strain>ATCC BAA-255 / R6</strain>
    </source>
</reference>
<name>NADD_STRR6</name>
<accession>P65505</accession>
<accession>Q97P94</accession>
<protein>
    <recommendedName>
        <fullName evidence="1">Probable nicotinate-nucleotide adenylyltransferase</fullName>
        <ecNumber evidence="1">2.7.7.18</ecNumber>
    </recommendedName>
    <alternativeName>
        <fullName evidence="1">Deamido-NAD(+) diphosphorylase</fullName>
    </alternativeName>
    <alternativeName>
        <fullName evidence="1">Deamido-NAD(+) pyrophosphorylase</fullName>
    </alternativeName>
    <alternativeName>
        <fullName evidence="1">Nicotinate mononucleotide adenylyltransferase</fullName>
        <shortName evidence="1">NaMN adenylyltransferase</shortName>
    </alternativeName>
</protein>
<evidence type="ECO:0000255" key="1">
    <source>
        <dbReference type="HAMAP-Rule" id="MF_00244"/>
    </source>
</evidence>
<comment type="function">
    <text evidence="1">Catalyzes the reversible adenylation of nicotinate mononucleotide (NaMN) to nicotinic acid adenine dinucleotide (NaAD).</text>
</comment>
<comment type="catalytic activity">
    <reaction evidence="1">
        <text>nicotinate beta-D-ribonucleotide + ATP + H(+) = deamido-NAD(+) + diphosphate</text>
        <dbReference type="Rhea" id="RHEA:22860"/>
        <dbReference type="ChEBI" id="CHEBI:15378"/>
        <dbReference type="ChEBI" id="CHEBI:30616"/>
        <dbReference type="ChEBI" id="CHEBI:33019"/>
        <dbReference type="ChEBI" id="CHEBI:57502"/>
        <dbReference type="ChEBI" id="CHEBI:58437"/>
        <dbReference type="EC" id="2.7.7.18"/>
    </reaction>
</comment>
<comment type="pathway">
    <text evidence="1">Cofactor biosynthesis; NAD(+) biosynthesis; deamido-NAD(+) from nicotinate D-ribonucleotide: step 1/1.</text>
</comment>
<comment type="similarity">
    <text evidence="1">Belongs to the NadD family.</text>
</comment>
<feature type="chain" id="PRO_0000181454" description="Probable nicotinate-nucleotide adenylyltransferase">
    <location>
        <begin position="1"/>
        <end position="209"/>
    </location>
</feature>
<keyword id="KW-0067">ATP-binding</keyword>
<keyword id="KW-0520">NAD</keyword>
<keyword id="KW-0547">Nucleotide-binding</keyword>
<keyword id="KW-0548">Nucleotidyltransferase</keyword>
<keyword id="KW-0662">Pyridine nucleotide biosynthesis</keyword>
<keyword id="KW-1185">Reference proteome</keyword>
<keyword id="KW-0808">Transferase</keyword>